<name>MMP9_BOVIN</name>
<sequence length="712" mass="79088">MSPLQPLVLALLVLACCSAVPRRRQPTVVVFPGEPRTNLTNRQLAEEYLYRYGYTPGAELSEDGQSLQRALLRFQRRLSLPETGELDSTTLNAMRAPRCGVPDVGRFQTFEGELKWHHHNITYWIQNYSEDLPRAVIDDAFARAFALWSAVTPLTFTRVYGPEADIVIQFGVREHGDGYPFDGKNGLLAHAFPPGKGIQGDAHFDDEELWSLGKGVVIPTYFGNAKGAACHFPFTFEGRSYSACTTDGRSDDMLWCSTTADYDADRQFGFCPSERLYTQDGNADGKPCVFPFTFQGRTYSACTSDGRSDGYRWCATTANYDQDKLYGFCPTRVDATVTGGNAAGELCVFPFTFLGKEYSACTREGRNDGHLWCATTSNFDKDKKWGFCPDQGYSLFLVAAHEFGHALGLDHTSVPEALMYPMYRFTEEHPLHRDDVQGIQHLYGPRPEPEPRPPTTTTTTTTEPQPTAPPTVCVTGPPTARPSEGPTTGPTGPPAAGPTGPPTAGPSAAPTESPDPAEDVCNVDIFDAIAEIRNRLHFFKAGKYWRLSEGGGRRVQGPFLVKSKWPALPRKLDSAFEDPLTKKIFFFSGRQVWVYTGASLLGPRRLDKLGLGPEVAQVTGALPRPEGKVLLFSGQSFWRFDVKTQKVDPQSVTPVDQMFPGVPISTHDIFQYQEKAYFCQDHFYWRVSSQNEVNQVDYVGYVTFDLLKCPED</sequence>
<accession>P52176</accession>
<accession>A5PKB8</accession>
<protein>
    <recommendedName>
        <fullName evidence="7">Matrix metalloproteinase-9</fullName>
        <shortName evidence="7">MMP-9</shortName>
        <ecNumber evidence="1">3.4.24.35</ecNumber>
    </recommendedName>
    <alternativeName>
        <fullName>92 kDa gelatinase</fullName>
    </alternativeName>
    <alternativeName>
        <fullName>92 kDa type IV collagenase</fullName>
    </alternativeName>
    <alternativeName>
        <fullName>Gelatinase B</fullName>
        <shortName>GELB</shortName>
    </alternativeName>
</protein>
<proteinExistence type="evidence at transcript level"/>
<organism>
    <name type="scientific">Bos taurus</name>
    <name type="common">Bovine</name>
    <dbReference type="NCBI Taxonomy" id="9913"/>
    <lineage>
        <taxon>Eukaryota</taxon>
        <taxon>Metazoa</taxon>
        <taxon>Chordata</taxon>
        <taxon>Craniata</taxon>
        <taxon>Vertebrata</taxon>
        <taxon>Euteleostomi</taxon>
        <taxon>Mammalia</taxon>
        <taxon>Eutheria</taxon>
        <taxon>Laurasiatheria</taxon>
        <taxon>Artiodactyla</taxon>
        <taxon>Ruminantia</taxon>
        <taxon>Pecora</taxon>
        <taxon>Bovidae</taxon>
        <taxon>Bovinae</taxon>
        <taxon>Bos</taxon>
    </lineage>
</organism>
<comment type="function">
    <text evidence="1 2">Matrix metalloproteinase that plays an essential role in local proteolysis of the extracellular matrix and in leukocyte migration (By similarity). Could play a role in bone osteoclastic resorption (By similarity). Cleaves KiSS1 at a Gly-|-Leu bond (By similarity). Cleaves NINJ1 to generate the Secreted ninjurin-1 form (By similarity). Cleaves type IV and type V collagen into large C-terminal three quarter fragments and shorter N-terminal one quarter fragments. Degrades fibronectin but not laminin or Pz-peptide (By similarity).</text>
</comment>
<comment type="catalytic activity">
    <reaction evidence="1">
        <text>Cleavage of gelatin types I and V and collagen types IV and V.</text>
        <dbReference type="EC" id="3.4.24.35"/>
    </reaction>
</comment>
<comment type="cofactor">
    <cofactor evidence="1">
        <name>Zn(2+)</name>
        <dbReference type="ChEBI" id="CHEBI:29105"/>
    </cofactor>
    <text evidence="1">Binds 2 Zn(2+) ions per subunit.</text>
</comment>
<comment type="cofactor">
    <cofactor evidence="1">
        <name>Ca(2+)</name>
        <dbReference type="ChEBI" id="CHEBI:29108"/>
    </cofactor>
    <text evidence="1">Binds 3 Ca(2+) ions per subunit.</text>
</comment>
<comment type="subunit">
    <text evidence="1">Exists as monomer or homodimer; disulfide-linked. Also exists as heterodimer with LCN2. Macrophages and transformed cell lines produce only the monomeric form. Interacts with ECM1.</text>
</comment>
<comment type="subcellular location">
    <subcellularLocation>
        <location evidence="1">Secreted</location>
        <location evidence="1">Extracellular space</location>
        <location evidence="1">Extracellular matrix</location>
    </subcellularLocation>
</comment>
<comment type="domain">
    <text evidence="1">The conserved cysteine present in the cysteine-switch motif binds the catalytic zinc ion, thus inhibiting the enzyme. The dissociation of the cysteine from the zinc ion upon the activation-peptide release activates the enzyme.</text>
</comment>
<comment type="PTM">
    <text evidence="1">N- and O-glycosylated.</text>
</comment>
<comment type="similarity">
    <text evidence="8">Belongs to the peptidase M10A family.</text>
</comment>
<dbReference type="EC" id="3.4.24.35" evidence="1"/>
<dbReference type="EMBL" id="X78324">
    <property type="protein sequence ID" value="CAA55127.1"/>
    <property type="molecule type" value="mRNA"/>
</dbReference>
<dbReference type="EMBL" id="BC142430">
    <property type="protein sequence ID" value="AAI42431.1"/>
    <property type="molecule type" value="mRNA"/>
</dbReference>
<dbReference type="PIR" id="I46031">
    <property type="entry name" value="I46031"/>
</dbReference>
<dbReference type="RefSeq" id="NP_777169.1">
    <property type="nucleotide sequence ID" value="NM_174744.2"/>
</dbReference>
<dbReference type="SMR" id="P52176"/>
<dbReference type="FunCoup" id="P52176">
    <property type="interactions" value="397"/>
</dbReference>
<dbReference type="STRING" id="9913.ENSBTAP00000027556"/>
<dbReference type="BindingDB" id="P52176"/>
<dbReference type="ChEMBL" id="CHEMBL5846"/>
<dbReference type="MEROPS" id="M10.004"/>
<dbReference type="GlyCosmos" id="P52176">
    <property type="glycosylation" value="3 sites, No reported glycans"/>
</dbReference>
<dbReference type="GlyGen" id="P52176">
    <property type="glycosylation" value="3 sites"/>
</dbReference>
<dbReference type="PaxDb" id="9913-ENSBTAP00000027556"/>
<dbReference type="PeptideAtlas" id="P52176"/>
<dbReference type="Ensembl" id="ENSBTAT00000027556.5">
    <property type="protein sequence ID" value="ENSBTAP00000027556.5"/>
    <property type="gene ID" value="ENSBTAG00000020676.6"/>
</dbReference>
<dbReference type="GeneID" id="282871"/>
<dbReference type="KEGG" id="bta:282871"/>
<dbReference type="CTD" id="4318"/>
<dbReference type="VEuPathDB" id="HostDB:ENSBTAG00000020676"/>
<dbReference type="VGNC" id="VGNC:31531">
    <property type="gene designation" value="MMP9"/>
</dbReference>
<dbReference type="eggNOG" id="KOG1565">
    <property type="taxonomic scope" value="Eukaryota"/>
</dbReference>
<dbReference type="GeneTree" id="ENSGT00940000157415"/>
<dbReference type="InParanoid" id="P52176"/>
<dbReference type="OMA" id="REKAYFC"/>
<dbReference type="OrthoDB" id="406838at2759"/>
<dbReference type="Reactome" id="R-BTA-1433557">
    <property type="pathway name" value="Signaling by SCF-KIT"/>
</dbReference>
<dbReference type="Reactome" id="R-BTA-1442490">
    <property type="pathway name" value="Collagen degradation"/>
</dbReference>
<dbReference type="Reactome" id="R-BTA-1474228">
    <property type="pathway name" value="Degradation of the extracellular matrix"/>
</dbReference>
<dbReference type="Reactome" id="R-BTA-1592389">
    <property type="pathway name" value="Activation of Matrix Metalloproteinases"/>
</dbReference>
<dbReference type="Reactome" id="R-BTA-3928665">
    <property type="pathway name" value="EPH-ephrin mediated repulsion of cells"/>
</dbReference>
<dbReference type="Reactome" id="R-BTA-6798695">
    <property type="pathway name" value="Neutrophil degranulation"/>
</dbReference>
<dbReference type="Reactome" id="R-BTA-9009391">
    <property type="pathway name" value="Extra-nuclear estrogen signaling"/>
</dbReference>
<dbReference type="PRO" id="PR:P52176"/>
<dbReference type="Proteomes" id="UP000009136">
    <property type="component" value="Chromosome 13"/>
</dbReference>
<dbReference type="Bgee" id="ENSBTAG00000020676">
    <property type="expression patterns" value="Expressed in milk and 57 other cell types or tissues"/>
</dbReference>
<dbReference type="GO" id="GO:0031012">
    <property type="term" value="C:extracellular matrix"/>
    <property type="evidence" value="ECO:0007669"/>
    <property type="project" value="InterPro"/>
</dbReference>
<dbReference type="GO" id="GO:0005615">
    <property type="term" value="C:extracellular space"/>
    <property type="evidence" value="ECO:0000250"/>
    <property type="project" value="UniProtKB"/>
</dbReference>
<dbReference type="GO" id="GO:0042802">
    <property type="term" value="F:identical protein binding"/>
    <property type="evidence" value="ECO:0007669"/>
    <property type="project" value="Ensembl"/>
</dbReference>
<dbReference type="GO" id="GO:0004222">
    <property type="term" value="F:metalloendopeptidase activity"/>
    <property type="evidence" value="ECO:0000250"/>
    <property type="project" value="UniProtKB"/>
</dbReference>
<dbReference type="GO" id="GO:0008233">
    <property type="term" value="F:peptidase activity"/>
    <property type="evidence" value="ECO:0000250"/>
    <property type="project" value="UniProtKB"/>
</dbReference>
<dbReference type="GO" id="GO:0008270">
    <property type="term" value="F:zinc ion binding"/>
    <property type="evidence" value="ECO:0007669"/>
    <property type="project" value="InterPro"/>
</dbReference>
<dbReference type="GO" id="GO:0006915">
    <property type="term" value="P:apoptotic process"/>
    <property type="evidence" value="ECO:0007669"/>
    <property type="project" value="Ensembl"/>
</dbReference>
<dbReference type="GO" id="GO:0016477">
    <property type="term" value="P:cell migration"/>
    <property type="evidence" value="ECO:0007669"/>
    <property type="project" value="Ensembl"/>
</dbReference>
<dbReference type="GO" id="GO:0071492">
    <property type="term" value="P:cellular response to UV-A"/>
    <property type="evidence" value="ECO:0007669"/>
    <property type="project" value="Ensembl"/>
</dbReference>
<dbReference type="GO" id="GO:0030574">
    <property type="term" value="P:collagen catabolic process"/>
    <property type="evidence" value="ECO:0000318"/>
    <property type="project" value="GO_Central"/>
</dbReference>
<dbReference type="GO" id="GO:0007566">
    <property type="term" value="P:embryo implantation"/>
    <property type="evidence" value="ECO:0007669"/>
    <property type="project" value="Ensembl"/>
</dbReference>
<dbReference type="GO" id="GO:0035987">
    <property type="term" value="P:endodermal cell differentiation"/>
    <property type="evidence" value="ECO:0007669"/>
    <property type="project" value="Ensembl"/>
</dbReference>
<dbReference type="GO" id="GO:0030198">
    <property type="term" value="P:extracellular matrix organization"/>
    <property type="evidence" value="ECO:0000318"/>
    <property type="project" value="GO_Central"/>
</dbReference>
<dbReference type="GO" id="GO:2000697">
    <property type="term" value="P:negative regulation of epithelial cell differentiation involved in kidney development"/>
    <property type="evidence" value="ECO:0007669"/>
    <property type="project" value="Ensembl"/>
</dbReference>
<dbReference type="GO" id="GO:2001243">
    <property type="term" value="P:negative regulation of intrinsic apoptotic signaling pathway"/>
    <property type="evidence" value="ECO:0007669"/>
    <property type="project" value="Ensembl"/>
</dbReference>
<dbReference type="GO" id="GO:0043065">
    <property type="term" value="P:positive regulation of apoptotic process"/>
    <property type="evidence" value="ECO:0007669"/>
    <property type="project" value="Ensembl"/>
</dbReference>
<dbReference type="GO" id="GO:0045742">
    <property type="term" value="P:positive regulation of epidermal growth factor receptor signaling pathway"/>
    <property type="evidence" value="ECO:0007669"/>
    <property type="project" value="Ensembl"/>
</dbReference>
<dbReference type="GO" id="GO:0051549">
    <property type="term" value="P:positive regulation of keratinocyte migration"/>
    <property type="evidence" value="ECO:0007669"/>
    <property type="project" value="Ensembl"/>
</dbReference>
<dbReference type="GO" id="GO:0090200">
    <property type="term" value="P:positive regulation of release of cytochrome c from mitochondria"/>
    <property type="evidence" value="ECO:0007669"/>
    <property type="project" value="Ensembl"/>
</dbReference>
<dbReference type="GO" id="GO:1904707">
    <property type="term" value="P:positive regulation of vascular associated smooth muscle cell proliferation"/>
    <property type="evidence" value="ECO:0007669"/>
    <property type="project" value="Ensembl"/>
</dbReference>
<dbReference type="GO" id="GO:0006508">
    <property type="term" value="P:proteolysis"/>
    <property type="evidence" value="ECO:0000250"/>
    <property type="project" value="UniProtKB"/>
</dbReference>
<dbReference type="GO" id="GO:1904645">
    <property type="term" value="P:response to amyloid-beta"/>
    <property type="evidence" value="ECO:0007669"/>
    <property type="project" value="Ensembl"/>
</dbReference>
<dbReference type="GO" id="GO:0001501">
    <property type="term" value="P:skeletal system development"/>
    <property type="evidence" value="ECO:0007669"/>
    <property type="project" value="Ensembl"/>
</dbReference>
<dbReference type="CDD" id="cd00062">
    <property type="entry name" value="FN2"/>
    <property type="match status" value="3"/>
</dbReference>
<dbReference type="CDD" id="cd00094">
    <property type="entry name" value="HX"/>
    <property type="match status" value="1"/>
</dbReference>
<dbReference type="CDD" id="cd04278">
    <property type="entry name" value="ZnMc_MMP"/>
    <property type="match status" value="1"/>
</dbReference>
<dbReference type="FunFam" id="3.40.390.10:FF:000010">
    <property type="entry name" value="72 kDa type IV collagenase"/>
    <property type="match status" value="1"/>
</dbReference>
<dbReference type="FunFam" id="2.10.10.10:FF:000001">
    <property type="entry name" value="Fibronectin 1a isoform 1"/>
    <property type="match status" value="3"/>
</dbReference>
<dbReference type="FunFam" id="2.110.10.10:FF:000011">
    <property type="entry name" value="Matrix metalloproteinase-9"/>
    <property type="match status" value="1"/>
</dbReference>
<dbReference type="Gene3D" id="3.40.390.10">
    <property type="entry name" value="Collagenase (Catalytic Domain)"/>
    <property type="match status" value="2"/>
</dbReference>
<dbReference type="Gene3D" id="2.10.10.10">
    <property type="entry name" value="Fibronectin, type II, collagen-binding"/>
    <property type="match status" value="2"/>
</dbReference>
<dbReference type="Gene3D" id="2.110.10.10">
    <property type="entry name" value="Hemopexin-like domain"/>
    <property type="match status" value="1"/>
</dbReference>
<dbReference type="InterPro" id="IPR000562">
    <property type="entry name" value="FN_type2_dom"/>
</dbReference>
<dbReference type="InterPro" id="IPR036943">
    <property type="entry name" value="FN_type2_sf"/>
</dbReference>
<dbReference type="InterPro" id="IPR000585">
    <property type="entry name" value="Hemopexin-like_dom"/>
</dbReference>
<dbReference type="InterPro" id="IPR036375">
    <property type="entry name" value="Hemopexin-like_dom_sf"/>
</dbReference>
<dbReference type="InterPro" id="IPR018487">
    <property type="entry name" value="Hemopexin-like_repeat"/>
</dbReference>
<dbReference type="InterPro" id="IPR013806">
    <property type="entry name" value="Kringle-like"/>
</dbReference>
<dbReference type="InterPro" id="IPR033739">
    <property type="entry name" value="M10A_MMP"/>
</dbReference>
<dbReference type="InterPro" id="IPR024079">
    <property type="entry name" value="MetalloPept_cat_dom_sf"/>
</dbReference>
<dbReference type="InterPro" id="IPR001818">
    <property type="entry name" value="Pept_M10_metallopeptidase"/>
</dbReference>
<dbReference type="InterPro" id="IPR021190">
    <property type="entry name" value="Pept_M10A"/>
</dbReference>
<dbReference type="InterPro" id="IPR021158">
    <property type="entry name" value="Pept_M10A_Zn_BS"/>
</dbReference>
<dbReference type="InterPro" id="IPR006026">
    <property type="entry name" value="Peptidase_Metallo"/>
</dbReference>
<dbReference type="InterPro" id="IPR002477">
    <property type="entry name" value="Peptidoglycan-bd-like"/>
</dbReference>
<dbReference type="InterPro" id="IPR036365">
    <property type="entry name" value="PGBD-like_sf"/>
</dbReference>
<dbReference type="InterPro" id="IPR006970">
    <property type="entry name" value="PT"/>
</dbReference>
<dbReference type="PANTHER" id="PTHR10201">
    <property type="entry name" value="MATRIX METALLOPROTEINASE"/>
    <property type="match status" value="1"/>
</dbReference>
<dbReference type="PANTHER" id="PTHR10201:SF30">
    <property type="entry name" value="MATRIX METALLOPROTEINASE-9"/>
    <property type="match status" value="1"/>
</dbReference>
<dbReference type="Pfam" id="PF00040">
    <property type="entry name" value="fn2"/>
    <property type="match status" value="3"/>
</dbReference>
<dbReference type="Pfam" id="PF00045">
    <property type="entry name" value="Hemopexin"/>
    <property type="match status" value="3"/>
</dbReference>
<dbReference type="Pfam" id="PF00413">
    <property type="entry name" value="Peptidase_M10"/>
    <property type="match status" value="2"/>
</dbReference>
<dbReference type="Pfam" id="PF01471">
    <property type="entry name" value="PG_binding_1"/>
    <property type="match status" value="1"/>
</dbReference>
<dbReference type="Pfam" id="PF04886">
    <property type="entry name" value="PT"/>
    <property type="match status" value="1"/>
</dbReference>
<dbReference type="PIRSF" id="PIRSF001191">
    <property type="entry name" value="Peptidase_M10A_matrix"/>
    <property type="match status" value="1"/>
</dbReference>
<dbReference type="PRINTS" id="PR00013">
    <property type="entry name" value="FNTYPEII"/>
</dbReference>
<dbReference type="PRINTS" id="PR00138">
    <property type="entry name" value="MATRIXIN"/>
</dbReference>
<dbReference type="SMART" id="SM00059">
    <property type="entry name" value="FN2"/>
    <property type="match status" value="3"/>
</dbReference>
<dbReference type="SMART" id="SM00120">
    <property type="entry name" value="HX"/>
    <property type="match status" value="4"/>
</dbReference>
<dbReference type="SMART" id="SM00235">
    <property type="entry name" value="ZnMc"/>
    <property type="match status" value="1"/>
</dbReference>
<dbReference type="SUPFAM" id="SSF50923">
    <property type="entry name" value="Hemopexin-like domain"/>
    <property type="match status" value="1"/>
</dbReference>
<dbReference type="SUPFAM" id="SSF57440">
    <property type="entry name" value="Kringle-like"/>
    <property type="match status" value="3"/>
</dbReference>
<dbReference type="SUPFAM" id="SSF55486">
    <property type="entry name" value="Metalloproteases ('zincins'), catalytic domain"/>
    <property type="match status" value="1"/>
</dbReference>
<dbReference type="SUPFAM" id="SSF47090">
    <property type="entry name" value="PGBD-like"/>
    <property type="match status" value="1"/>
</dbReference>
<dbReference type="PROSITE" id="PS00546">
    <property type="entry name" value="CYSTEINE_SWITCH"/>
    <property type="match status" value="1"/>
</dbReference>
<dbReference type="PROSITE" id="PS00023">
    <property type="entry name" value="FN2_1"/>
    <property type="match status" value="3"/>
</dbReference>
<dbReference type="PROSITE" id="PS51092">
    <property type="entry name" value="FN2_2"/>
    <property type="match status" value="3"/>
</dbReference>
<dbReference type="PROSITE" id="PS51642">
    <property type="entry name" value="HEMOPEXIN_2"/>
    <property type="match status" value="4"/>
</dbReference>
<dbReference type="PROSITE" id="PS00142">
    <property type="entry name" value="ZINC_PROTEASE"/>
    <property type="match status" value="1"/>
</dbReference>
<keyword id="KW-0106">Calcium</keyword>
<keyword id="KW-0177">Collagen degradation</keyword>
<keyword id="KW-1015">Disulfide bond</keyword>
<keyword id="KW-0272">Extracellular matrix</keyword>
<keyword id="KW-0325">Glycoprotein</keyword>
<keyword id="KW-0378">Hydrolase</keyword>
<keyword id="KW-0479">Metal-binding</keyword>
<keyword id="KW-0482">Metalloprotease</keyword>
<keyword id="KW-0645">Protease</keyword>
<keyword id="KW-1185">Reference proteome</keyword>
<keyword id="KW-0677">Repeat</keyword>
<keyword id="KW-0964">Secreted</keyword>
<keyword id="KW-0732">Signal</keyword>
<keyword id="KW-0862">Zinc</keyword>
<keyword id="KW-0865">Zymogen</keyword>
<gene>
    <name evidence="7" type="primary">MMP9</name>
</gene>
<reference key="1">
    <citation type="journal article" date="1995" name="Mol. Biochem. Parasitol.">
        <title>Infection with Theileria annulata induces expression of matrix metalloproteinase 9 and transcription factor AP-1 in bovine leucocytes.</title>
        <authorList>
            <person name="Baylis H.A."/>
            <person name="Megson A."/>
            <person name="Hall R."/>
        </authorList>
    </citation>
    <scope>NUCLEOTIDE SEQUENCE [MRNA]</scope>
    <source>
        <tissue>Leukocyte</tissue>
    </source>
</reference>
<reference key="2">
    <citation type="submission" date="2007-06" db="EMBL/GenBank/DDBJ databases">
        <authorList>
            <consortium name="NIH - Mammalian Gene Collection (MGC) project"/>
        </authorList>
    </citation>
    <scope>NUCLEOTIDE SEQUENCE [LARGE SCALE MRNA]</scope>
    <source>
        <strain>Crossbred X Angus</strain>
        <tissue>Ileum</tissue>
    </source>
</reference>
<feature type="signal peptide" evidence="1">
    <location>
        <begin position="1"/>
        <end position="19"/>
    </location>
</feature>
<feature type="propeptide" id="PRO_0000028750" description="Activation peptide" evidence="1">
    <location>
        <begin position="20"/>
        <end position="106"/>
    </location>
</feature>
<feature type="chain" id="PRO_0000028751" description="Matrix metalloproteinase-9">
    <location>
        <begin position="107"/>
        <end position="712"/>
    </location>
</feature>
<feature type="domain" description="Fibronectin type-II 1" evidence="4">
    <location>
        <begin position="225"/>
        <end position="273"/>
    </location>
</feature>
<feature type="domain" description="Fibronectin type-II 2" evidence="4">
    <location>
        <begin position="283"/>
        <end position="331"/>
    </location>
</feature>
<feature type="domain" description="Fibronectin type-II 3" evidence="4">
    <location>
        <begin position="342"/>
        <end position="390"/>
    </location>
</feature>
<feature type="repeat" description="Hemopexin 1">
    <location>
        <begin position="523"/>
        <end position="568"/>
    </location>
</feature>
<feature type="repeat" description="Hemopexin 2">
    <location>
        <begin position="569"/>
        <end position="613"/>
    </location>
</feature>
<feature type="repeat" description="Hemopexin 3">
    <location>
        <begin position="615"/>
        <end position="662"/>
    </location>
</feature>
<feature type="repeat" description="Hemopexin 4">
    <location>
        <begin position="663"/>
        <end position="709"/>
    </location>
</feature>
<feature type="region of interest" description="Disordered" evidence="6">
    <location>
        <begin position="440"/>
        <end position="519"/>
    </location>
</feature>
<feature type="short sequence motif" description="Cysteine switch" evidence="1">
    <location>
        <begin position="97"/>
        <end position="104"/>
    </location>
</feature>
<feature type="compositionally biased region" description="Low complexity" evidence="6">
    <location>
        <begin position="455"/>
        <end position="465"/>
    </location>
</feature>
<feature type="compositionally biased region" description="Pro residues" evidence="6">
    <location>
        <begin position="491"/>
        <end position="504"/>
    </location>
</feature>
<feature type="compositionally biased region" description="Low complexity" evidence="6">
    <location>
        <begin position="505"/>
        <end position="514"/>
    </location>
</feature>
<feature type="active site" evidence="5">
    <location>
        <position position="402"/>
    </location>
</feature>
<feature type="binding site" description="in inhibited form" evidence="1">
    <location>
        <position position="99"/>
    </location>
    <ligand>
        <name>Zn(2+)</name>
        <dbReference type="ChEBI" id="CHEBI:29105"/>
        <label>2</label>
        <note>catalytic</note>
    </ligand>
</feature>
<feature type="binding site" evidence="1">
    <location>
        <position position="131"/>
    </location>
    <ligand>
        <name>Ca(2+)</name>
        <dbReference type="ChEBI" id="CHEBI:29108"/>
        <label>1</label>
    </ligand>
</feature>
<feature type="binding site" evidence="1">
    <location>
        <position position="165"/>
    </location>
    <ligand>
        <name>Ca(2+)</name>
        <dbReference type="ChEBI" id="CHEBI:29108"/>
        <label>2</label>
    </ligand>
</feature>
<feature type="binding site" evidence="1">
    <location>
        <position position="175"/>
    </location>
    <ligand>
        <name>Zn(2+)</name>
        <dbReference type="ChEBI" id="CHEBI:29105"/>
        <label>1</label>
        <note>structural</note>
    </ligand>
</feature>
<feature type="binding site" evidence="1">
    <location>
        <position position="177"/>
    </location>
    <ligand>
        <name>Zn(2+)</name>
        <dbReference type="ChEBI" id="CHEBI:29105"/>
        <label>1</label>
        <note>structural</note>
    </ligand>
</feature>
<feature type="binding site" evidence="1">
    <location>
        <position position="182"/>
    </location>
    <ligand>
        <name>Ca(2+)</name>
        <dbReference type="ChEBI" id="CHEBI:29108"/>
        <label>3</label>
    </ligand>
</feature>
<feature type="binding site" evidence="1">
    <location>
        <position position="183"/>
    </location>
    <ligand>
        <name>Ca(2+)</name>
        <dbReference type="ChEBI" id="CHEBI:29108"/>
        <label>3</label>
    </ligand>
</feature>
<feature type="binding site" evidence="1">
    <location>
        <position position="185"/>
    </location>
    <ligand>
        <name>Ca(2+)</name>
        <dbReference type="ChEBI" id="CHEBI:29108"/>
        <label>3</label>
    </ligand>
</feature>
<feature type="binding site" evidence="1">
    <location>
        <position position="187"/>
    </location>
    <ligand>
        <name>Ca(2+)</name>
        <dbReference type="ChEBI" id="CHEBI:29108"/>
        <label>3</label>
    </ligand>
</feature>
<feature type="binding site" evidence="1">
    <location>
        <position position="190"/>
    </location>
    <ligand>
        <name>Zn(2+)</name>
        <dbReference type="ChEBI" id="CHEBI:29105"/>
        <label>1</label>
        <note>structural</note>
    </ligand>
</feature>
<feature type="binding site" evidence="1">
    <location>
        <position position="197"/>
    </location>
    <ligand>
        <name>Ca(2+)</name>
        <dbReference type="ChEBI" id="CHEBI:29108"/>
        <label>2</label>
    </ligand>
</feature>
<feature type="binding site" evidence="1">
    <location>
        <position position="199"/>
    </location>
    <ligand>
        <name>Ca(2+)</name>
        <dbReference type="ChEBI" id="CHEBI:29108"/>
        <label>2</label>
    </ligand>
</feature>
<feature type="binding site" evidence="1">
    <location>
        <position position="201"/>
    </location>
    <ligand>
        <name>Ca(2+)</name>
        <dbReference type="ChEBI" id="CHEBI:29108"/>
        <label>2</label>
    </ligand>
</feature>
<feature type="binding site" evidence="1">
    <location>
        <position position="203"/>
    </location>
    <ligand>
        <name>Zn(2+)</name>
        <dbReference type="ChEBI" id="CHEBI:29105"/>
        <label>1</label>
        <note>structural</note>
    </ligand>
</feature>
<feature type="binding site" evidence="1">
    <location>
        <position position="205"/>
    </location>
    <ligand>
        <name>Ca(2+)</name>
        <dbReference type="ChEBI" id="CHEBI:29108"/>
        <label>3</label>
    </ligand>
</feature>
<feature type="binding site" evidence="1">
    <location>
        <position position="206"/>
    </location>
    <ligand>
        <name>Ca(2+)</name>
        <dbReference type="ChEBI" id="CHEBI:29108"/>
        <label>1</label>
    </ligand>
</feature>
<feature type="binding site" evidence="1">
    <location>
        <position position="208"/>
    </location>
    <ligand>
        <name>Ca(2+)</name>
        <dbReference type="ChEBI" id="CHEBI:29108"/>
        <label>1</label>
    </ligand>
</feature>
<feature type="binding site" evidence="1">
    <location>
        <position position="208"/>
    </location>
    <ligand>
        <name>Ca(2+)</name>
        <dbReference type="ChEBI" id="CHEBI:29108"/>
        <label>3</label>
    </ligand>
</feature>
<feature type="binding site" evidence="1">
    <location>
        <position position="401"/>
    </location>
    <ligand>
        <name>Zn(2+)</name>
        <dbReference type="ChEBI" id="CHEBI:29105"/>
        <label>2</label>
        <note>catalytic</note>
    </ligand>
</feature>
<feature type="binding site" evidence="1">
    <location>
        <position position="405"/>
    </location>
    <ligand>
        <name>Zn(2+)</name>
        <dbReference type="ChEBI" id="CHEBI:29105"/>
        <label>2</label>
        <note>catalytic</note>
    </ligand>
</feature>
<feature type="binding site" evidence="1">
    <location>
        <position position="411"/>
    </location>
    <ligand>
        <name>Zn(2+)</name>
        <dbReference type="ChEBI" id="CHEBI:29105"/>
        <label>2</label>
        <note>catalytic</note>
    </ligand>
</feature>
<feature type="glycosylation site" description="N-linked (GlcNAc...) asparagine" evidence="3">
    <location>
        <position position="38"/>
    </location>
</feature>
<feature type="glycosylation site" description="N-linked (GlcNAc...) asparagine" evidence="3">
    <location>
        <position position="120"/>
    </location>
</feature>
<feature type="glycosylation site" description="N-linked (GlcNAc...) asparagine" evidence="3">
    <location>
        <position position="127"/>
    </location>
</feature>
<feature type="disulfide bond" evidence="4">
    <location>
        <begin position="230"/>
        <end position="256"/>
    </location>
</feature>
<feature type="disulfide bond" evidence="4">
    <location>
        <begin position="244"/>
        <end position="271"/>
    </location>
</feature>
<feature type="disulfide bond" evidence="4">
    <location>
        <begin position="288"/>
        <end position="314"/>
    </location>
</feature>
<feature type="disulfide bond" evidence="4">
    <location>
        <begin position="302"/>
        <end position="329"/>
    </location>
</feature>
<feature type="disulfide bond" evidence="4">
    <location>
        <begin position="347"/>
        <end position="373"/>
    </location>
</feature>
<feature type="disulfide bond" evidence="4">
    <location>
        <begin position="361"/>
        <end position="388"/>
    </location>
</feature>
<feature type="disulfide bond" evidence="4">
    <location>
        <begin position="521"/>
        <end position="709"/>
    </location>
</feature>
<evidence type="ECO:0000250" key="1">
    <source>
        <dbReference type="UniProtKB" id="P14780"/>
    </source>
</evidence>
<evidence type="ECO:0000250" key="2">
    <source>
        <dbReference type="UniProtKB" id="P41245"/>
    </source>
</evidence>
<evidence type="ECO:0000255" key="3"/>
<evidence type="ECO:0000255" key="4">
    <source>
        <dbReference type="PROSITE-ProRule" id="PRU00479"/>
    </source>
</evidence>
<evidence type="ECO:0000255" key="5">
    <source>
        <dbReference type="PROSITE-ProRule" id="PRU10095"/>
    </source>
</evidence>
<evidence type="ECO:0000256" key="6">
    <source>
        <dbReference type="SAM" id="MobiDB-lite"/>
    </source>
</evidence>
<evidence type="ECO:0000303" key="7">
    <source>
    </source>
</evidence>
<evidence type="ECO:0000305" key="8"/>